<keyword id="KW-0687">Ribonucleoprotein</keyword>
<keyword id="KW-0689">Ribosomal protein</keyword>
<keyword id="KW-0694">RNA-binding</keyword>
<keyword id="KW-0699">rRNA-binding</keyword>
<gene>
    <name evidence="1" type="primary">rpsT</name>
    <name type="ordered locus">BamMC406_2470</name>
</gene>
<comment type="function">
    <text evidence="1">Binds directly to 16S ribosomal RNA.</text>
</comment>
<comment type="similarity">
    <text evidence="1">Belongs to the bacterial ribosomal protein bS20 family.</text>
</comment>
<evidence type="ECO:0000255" key="1">
    <source>
        <dbReference type="HAMAP-Rule" id="MF_00500"/>
    </source>
</evidence>
<evidence type="ECO:0000256" key="2">
    <source>
        <dbReference type="SAM" id="MobiDB-lite"/>
    </source>
</evidence>
<evidence type="ECO:0000305" key="3"/>
<dbReference type="EMBL" id="CP001025">
    <property type="protein sequence ID" value="ACB64948.1"/>
    <property type="molecule type" value="Genomic_DNA"/>
</dbReference>
<dbReference type="RefSeq" id="WP_006482211.1">
    <property type="nucleotide sequence ID" value="NC_010551.1"/>
</dbReference>
<dbReference type="SMR" id="B1YVE4"/>
<dbReference type="GeneID" id="98106158"/>
<dbReference type="KEGG" id="bac:BamMC406_2470"/>
<dbReference type="HOGENOM" id="CLU_160655_4_0_4"/>
<dbReference type="OrthoDB" id="9807974at2"/>
<dbReference type="Proteomes" id="UP000001680">
    <property type="component" value="Chromosome 1"/>
</dbReference>
<dbReference type="GO" id="GO:0005829">
    <property type="term" value="C:cytosol"/>
    <property type="evidence" value="ECO:0007669"/>
    <property type="project" value="TreeGrafter"/>
</dbReference>
<dbReference type="GO" id="GO:0015935">
    <property type="term" value="C:small ribosomal subunit"/>
    <property type="evidence" value="ECO:0007669"/>
    <property type="project" value="TreeGrafter"/>
</dbReference>
<dbReference type="GO" id="GO:0070181">
    <property type="term" value="F:small ribosomal subunit rRNA binding"/>
    <property type="evidence" value="ECO:0007669"/>
    <property type="project" value="TreeGrafter"/>
</dbReference>
<dbReference type="GO" id="GO:0003735">
    <property type="term" value="F:structural constituent of ribosome"/>
    <property type="evidence" value="ECO:0007669"/>
    <property type="project" value="InterPro"/>
</dbReference>
<dbReference type="GO" id="GO:0006412">
    <property type="term" value="P:translation"/>
    <property type="evidence" value="ECO:0007669"/>
    <property type="project" value="UniProtKB-UniRule"/>
</dbReference>
<dbReference type="FunFam" id="1.20.58.110:FF:000001">
    <property type="entry name" value="30S ribosomal protein S20"/>
    <property type="match status" value="1"/>
</dbReference>
<dbReference type="Gene3D" id="1.20.58.110">
    <property type="entry name" value="Ribosomal protein S20"/>
    <property type="match status" value="1"/>
</dbReference>
<dbReference type="HAMAP" id="MF_00500">
    <property type="entry name" value="Ribosomal_bS20"/>
    <property type="match status" value="1"/>
</dbReference>
<dbReference type="InterPro" id="IPR002583">
    <property type="entry name" value="Ribosomal_bS20"/>
</dbReference>
<dbReference type="InterPro" id="IPR036510">
    <property type="entry name" value="Ribosomal_bS20_sf"/>
</dbReference>
<dbReference type="NCBIfam" id="TIGR00029">
    <property type="entry name" value="S20"/>
    <property type="match status" value="1"/>
</dbReference>
<dbReference type="PANTHER" id="PTHR33398">
    <property type="entry name" value="30S RIBOSOMAL PROTEIN S20"/>
    <property type="match status" value="1"/>
</dbReference>
<dbReference type="PANTHER" id="PTHR33398:SF1">
    <property type="entry name" value="SMALL RIBOSOMAL SUBUNIT PROTEIN BS20C"/>
    <property type="match status" value="1"/>
</dbReference>
<dbReference type="Pfam" id="PF01649">
    <property type="entry name" value="Ribosomal_S20p"/>
    <property type="match status" value="1"/>
</dbReference>
<dbReference type="SUPFAM" id="SSF46992">
    <property type="entry name" value="Ribosomal protein S20"/>
    <property type="match status" value="1"/>
</dbReference>
<proteinExistence type="inferred from homology"/>
<reference key="1">
    <citation type="submission" date="2008-04" db="EMBL/GenBank/DDBJ databases">
        <title>Complete sequence of chromosome 1 of Burkholderia ambifaria MC40-6.</title>
        <authorList>
            <person name="Copeland A."/>
            <person name="Lucas S."/>
            <person name="Lapidus A."/>
            <person name="Glavina del Rio T."/>
            <person name="Dalin E."/>
            <person name="Tice H."/>
            <person name="Pitluck S."/>
            <person name="Chain P."/>
            <person name="Malfatti S."/>
            <person name="Shin M."/>
            <person name="Vergez L."/>
            <person name="Lang D."/>
            <person name="Schmutz J."/>
            <person name="Larimer F."/>
            <person name="Land M."/>
            <person name="Hauser L."/>
            <person name="Kyrpides N."/>
            <person name="Lykidis A."/>
            <person name="Ramette A."/>
            <person name="Konstantinidis K."/>
            <person name="Tiedje J."/>
            <person name="Richardson P."/>
        </authorList>
    </citation>
    <scope>NUCLEOTIDE SEQUENCE [LARGE SCALE GENOMIC DNA]</scope>
    <source>
        <strain>MC40-6</strain>
    </source>
</reference>
<organism>
    <name type="scientific">Burkholderia ambifaria (strain MC40-6)</name>
    <dbReference type="NCBI Taxonomy" id="398577"/>
    <lineage>
        <taxon>Bacteria</taxon>
        <taxon>Pseudomonadati</taxon>
        <taxon>Pseudomonadota</taxon>
        <taxon>Betaproteobacteria</taxon>
        <taxon>Burkholderiales</taxon>
        <taxon>Burkholderiaceae</taxon>
        <taxon>Burkholderia</taxon>
        <taxon>Burkholderia cepacia complex</taxon>
    </lineage>
</organism>
<name>RS20_BURA4</name>
<protein>
    <recommendedName>
        <fullName evidence="1">Small ribosomal subunit protein bS20</fullName>
    </recommendedName>
    <alternativeName>
        <fullName evidence="3">30S ribosomal protein S20</fullName>
    </alternativeName>
</protein>
<sequence>MANSAQARKRARQAAKANSHNSALRSKFRTAIKSVRKAVEAGDQAKAAELFKAAVKTIDTIADKKIVHKNKAARSKSRLAAAVKGLQAAA</sequence>
<feature type="chain" id="PRO_1000126409" description="Small ribosomal subunit protein bS20">
    <location>
        <begin position="1"/>
        <end position="90"/>
    </location>
</feature>
<feature type="region of interest" description="Disordered" evidence="2">
    <location>
        <begin position="1"/>
        <end position="25"/>
    </location>
</feature>
<accession>B1YVE4</accession>